<organismHost>
    <name type="scientific">Brassica campestris</name>
    <name type="common">Field mustard</name>
    <dbReference type="NCBI Taxonomy" id="3711"/>
</organismHost>
<organismHost>
    <name type="scientific">Solanum tuberosum</name>
    <name type="common">Potato</name>
    <dbReference type="NCBI Taxonomy" id="4113"/>
</organismHost>
<name>TGB1_PVX</name>
<proteinExistence type="inferred from homology"/>
<keyword id="KW-1035">Host cytoplasm</keyword>
<keyword id="KW-0945">Host-virus interaction</keyword>
<keyword id="KW-1090">Inhibition of host innate immune response by virus</keyword>
<keyword id="KW-0694">RNA-binding</keyword>
<keyword id="KW-0941">Suppressor of RNA silencing</keyword>
<keyword id="KW-0813">Transport</keyword>
<keyword id="KW-0899">Viral immunoevasion</keyword>
<keyword id="KW-0916">Viral movement protein</keyword>
<sequence>MDILIISLKSLGYSRTHKSLDSGPLVVHAVAGAGKSTALRKLILRHPTFTVHTLGVPDKVSIRTRGIQKPGPIPEGNFAILDEYTLDNTTRNSYQALFADPYQAPEFSLEPHFYLETSFRVPRKVADLIAGCGFDFETNSQEEGHLEITGIFKGPLLGKVIAIDEESETTLSKHGVEFVKPCQVTGLEFKVVTVVSAAPIEEIGQSTAFYNAITRSKGLTYVRAGT</sequence>
<reference key="1">
    <citation type="journal article" date="1988" name="Nucleic Acids Res.">
        <title>The nucleotide sequence of potato virus X RNA.</title>
        <authorList>
            <person name="Skryabin K.G."/>
            <person name="Kraev A.S."/>
            <person name="Morozov S.Y."/>
            <person name="Rozanov M.N."/>
            <person name="Chernov B.K."/>
            <person name="Lukasheva L.I."/>
            <person name="Atabekov J.G."/>
        </authorList>
    </citation>
    <scope>NUCLEOTIDE SEQUENCE [GENOMIC RNA]</scope>
</reference>
<reference key="2">
    <citation type="journal article" date="2000" name="Cell">
        <title>A viral movement protein prevents spread of the gene silencing signal in Nicotiana benthamiana.</title>
        <authorList>
            <person name="Voinnet O."/>
            <person name="Lederer C."/>
            <person name="Baulcombe D.C."/>
        </authorList>
    </citation>
    <scope>FUNCTION</scope>
</reference>
<reference key="3">
    <citation type="journal article" date="2005" name="Mol. Plant Microbe Interact.">
        <title>A new cell-to-cell transport model for Potexviruses.</title>
        <authorList>
            <person name="Verchot-Lubicz J."/>
        </authorList>
    </citation>
    <scope>REVIEW</scope>
</reference>
<organism>
    <name type="scientific">Potato virus X</name>
    <name type="common">PVX</name>
    <dbReference type="NCBI Taxonomy" id="12183"/>
    <lineage>
        <taxon>Viruses</taxon>
        <taxon>Riboviria</taxon>
        <taxon>Orthornavirae</taxon>
        <taxon>Kitrinoviricota</taxon>
        <taxon>Alsuviricetes</taxon>
        <taxon>Tymovirales</taxon>
        <taxon>Alphaflexiviridae</taxon>
        <taxon>Potexvirus</taxon>
    </lineage>
</organism>
<accession>P09396</accession>
<evidence type="ECO:0000250" key="1"/>
<evidence type="ECO:0000269" key="2">
    <source>
    </source>
</evidence>
<evidence type="ECO:0000305" key="3"/>
<protein>
    <recommendedName>
        <fullName>Movement and silencing protein TGBp1</fullName>
    </recommendedName>
    <alternativeName>
        <fullName>25 kDa protein</fullName>
    </alternativeName>
    <alternativeName>
        <fullName>Silencing suppressor P25</fullName>
    </alternativeName>
    <alternativeName>
        <fullName>Triple gene block 1 protein</fullName>
        <shortName>TGBp1</shortName>
    </alternativeName>
</protein>
<gene>
    <name type="ORF">ORF2</name>
</gene>
<dbReference type="EMBL" id="M72416">
    <property type="protein sequence ID" value="AAA47168.1"/>
    <property type="molecule type" value="Genomic_RNA"/>
</dbReference>
<dbReference type="Proteomes" id="UP000006841">
    <property type="component" value="Genome"/>
</dbReference>
<dbReference type="GO" id="GO:0039714">
    <property type="term" value="C:cytoplasmic viral factory"/>
    <property type="evidence" value="ECO:0000314"/>
    <property type="project" value="UniProtKB"/>
</dbReference>
<dbReference type="GO" id="GO:0005524">
    <property type="term" value="F:ATP binding"/>
    <property type="evidence" value="ECO:0007669"/>
    <property type="project" value="InterPro"/>
</dbReference>
<dbReference type="GO" id="GO:0003723">
    <property type="term" value="F:RNA binding"/>
    <property type="evidence" value="ECO:0007669"/>
    <property type="project" value="UniProtKB-KW"/>
</dbReference>
<dbReference type="GO" id="GO:0052170">
    <property type="term" value="P:symbiont-mediated suppression of host innate immune response"/>
    <property type="evidence" value="ECO:0007669"/>
    <property type="project" value="UniProtKB-KW"/>
</dbReference>
<dbReference type="GO" id="GO:0046740">
    <property type="term" value="P:transport of virus in host, cell to cell"/>
    <property type="evidence" value="ECO:0007669"/>
    <property type="project" value="UniProtKB-KW"/>
</dbReference>
<dbReference type="InterPro" id="IPR027351">
    <property type="entry name" value="(+)RNA_virus_helicase_core_dom"/>
</dbReference>
<dbReference type="Pfam" id="PF01443">
    <property type="entry name" value="Viral_helicase1"/>
    <property type="match status" value="1"/>
</dbReference>
<dbReference type="PROSITE" id="PS51657">
    <property type="entry name" value="PSRV_HELICASE"/>
    <property type="match status" value="1"/>
</dbReference>
<comment type="function">
    <text evidence="2">Transports viral genome to neighboring plant cells directly through plasmosdesmata, without any budding. The movement protein allows efficient cell to cell propagation, by bypassing the host cell wall barrier. Increases plasmodesma size exclusion limit. Acts as a suppressor of RNA-mediated gene silencing, also known as post-transcriptional gene silencing (PTGS), a mechanism of plant viral defense that limits the accumulation of viral RNAs.</text>
</comment>
<comment type="subunit">
    <text evidence="1">Homodimer and homooligomer. Interacts with capsid protein. Interacts with host AGO1; this interaction targets the host protein for degradation, thereby suppressing the antiviral RNA silencing (By similarity).</text>
</comment>
<comment type="subcellular location">
    <subcellularLocation>
        <location evidence="1">Host cytoplasm</location>
    </subcellularLocation>
</comment>
<comment type="miscellaneous">
    <text>TGBp1, TGBp2 and TGBp3 seem to act together for cell-to-cell propagation. TGBp1 is the main movement protein that physically cross the plasmodesma with the viral genome. TGBp2 and TGBp3 would facilitate TGBp1 function.</text>
</comment>
<comment type="similarity">
    <text evidence="3">Belongs to the Tymovirales TGBp1 protein family.</text>
</comment>
<feature type="chain" id="PRO_0000222570" description="Movement and silencing protein TGBp1">
    <location>
        <begin position="1"/>
        <end position="226"/>
    </location>
</feature>
<feature type="domain" description="(+)RNA virus helicase ATP-binding">
    <location>
        <begin position="1"/>
        <end position="115"/>
    </location>
</feature>
<feature type="domain" description="(+)RNA virus helicase C-terminal">
    <location>
        <begin position="116"/>
        <end position="226"/>
    </location>
</feature>